<feature type="chain" id="PRO_0000073989" description="DNA-directed RNA polymerase II subunit RPB7">
    <location>
        <begin position="1"/>
        <end position="172"/>
    </location>
</feature>
<gene>
    <name type="primary">polr2g</name>
    <name type="synonym">polr2gl</name>
    <name type="ORF">zgc:55297</name>
</gene>
<accession>Q7ZW41</accession>
<dbReference type="EMBL" id="BC045299">
    <property type="protein sequence ID" value="AAH45299.1"/>
    <property type="molecule type" value="mRNA"/>
</dbReference>
<dbReference type="RefSeq" id="NP_955963.1">
    <property type="nucleotide sequence ID" value="NM_199669.1"/>
</dbReference>
<dbReference type="SMR" id="Q7ZW41"/>
<dbReference type="FunCoup" id="Q7ZW41">
    <property type="interactions" value="2505"/>
</dbReference>
<dbReference type="STRING" id="7955.ENSDARP00000073018"/>
<dbReference type="PaxDb" id="7955-ENSDARP00000073018"/>
<dbReference type="Ensembl" id="ENSDART00000078557">
    <property type="protein sequence ID" value="ENSDARP00000073018"/>
    <property type="gene ID" value="ENSDARG00000056127"/>
</dbReference>
<dbReference type="GeneID" id="324088"/>
<dbReference type="KEGG" id="dre:324088"/>
<dbReference type="AGR" id="ZFIN:ZDB-GENE-030131-2808"/>
<dbReference type="CTD" id="5436"/>
<dbReference type="ZFIN" id="ZDB-GENE-030131-2808">
    <property type="gene designation" value="polr2g"/>
</dbReference>
<dbReference type="eggNOG" id="KOG3298">
    <property type="taxonomic scope" value="Eukaryota"/>
</dbReference>
<dbReference type="HOGENOM" id="CLU_085878_2_0_1"/>
<dbReference type="InParanoid" id="Q7ZW41"/>
<dbReference type="OMA" id="TMRQPGL"/>
<dbReference type="OrthoDB" id="1162399at2759"/>
<dbReference type="PhylomeDB" id="Q7ZW41"/>
<dbReference type="TreeFam" id="TF103042"/>
<dbReference type="Reactome" id="R-DRE-6781823">
    <property type="pathway name" value="Formation of TC-NER Pre-Incision Complex"/>
</dbReference>
<dbReference type="Reactome" id="R-DRE-6782135">
    <property type="pathway name" value="Dual incision in TC-NER"/>
</dbReference>
<dbReference type="Reactome" id="R-DRE-6796648">
    <property type="pathway name" value="TP53 Regulates Transcription of DNA Repair Genes"/>
</dbReference>
<dbReference type="Reactome" id="R-DRE-6807505">
    <property type="pathway name" value="RNA polymerase II transcribes snRNA genes"/>
</dbReference>
<dbReference type="Reactome" id="R-DRE-72086">
    <property type="pathway name" value="mRNA Capping"/>
</dbReference>
<dbReference type="Reactome" id="R-DRE-72163">
    <property type="pathway name" value="mRNA Splicing - Major Pathway"/>
</dbReference>
<dbReference type="Reactome" id="R-DRE-77075">
    <property type="pathway name" value="RNA Pol II CTD phosphorylation and interaction with CE"/>
</dbReference>
<dbReference type="PRO" id="PR:Q7ZW41"/>
<dbReference type="Proteomes" id="UP000000437">
    <property type="component" value="Chromosome 14"/>
</dbReference>
<dbReference type="Bgee" id="ENSDARG00000056127">
    <property type="expression patterns" value="Expressed in early embryo and 29 other cell types or tissues"/>
</dbReference>
<dbReference type="ExpressionAtlas" id="Q7ZW41">
    <property type="expression patterns" value="baseline"/>
</dbReference>
<dbReference type="GO" id="GO:0005634">
    <property type="term" value="C:nucleus"/>
    <property type="evidence" value="ECO:0000250"/>
    <property type="project" value="UniProtKB"/>
</dbReference>
<dbReference type="GO" id="GO:0000932">
    <property type="term" value="C:P-body"/>
    <property type="evidence" value="ECO:0000318"/>
    <property type="project" value="GO_Central"/>
</dbReference>
<dbReference type="GO" id="GO:0005665">
    <property type="term" value="C:RNA polymerase II, core complex"/>
    <property type="evidence" value="ECO:0000250"/>
    <property type="project" value="UniProtKB"/>
</dbReference>
<dbReference type="GO" id="GO:0003697">
    <property type="term" value="F:single-stranded DNA binding"/>
    <property type="evidence" value="ECO:0000318"/>
    <property type="project" value="GO_Central"/>
</dbReference>
<dbReference type="GO" id="GO:0003727">
    <property type="term" value="F:single-stranded RNA binding"/>
    <property type="evidence" value="ECO:0000318"/>
    <property type="project" value="GO_Central"/>
</dbReference>
<dbReference type="GO" id="GO:0031369">
    <property type="term" value="F:translation initiation factor binding"/>
    <property type="evidence" value="ECO:0000318"/>
    <property type="project" value="GO_Central"/>
</dbReference>
<dbReference type="GO" id="GO:0000956">
    <property type="term" value="P:nuclear-transcribed mRNA catabolic process"/>
    <property type="evidence" value="ECO:0000318"/>
    <property type="project" value="GO_Central"/>
</dbReference>
<dbReference type="GO" id="GO:0060213">
    <property type="term" value="P:positive regulation of nuclear-transcribed mRNA poly(A) tail shortening"/>
    <property type="evidence" value="ECO:0000318"/>
    <property type="project" value="GO_Central"/>
</dbReference>
<dbReference type="GO" id="GO:0045948">
    <property type="term" value="P:positive regulation of translational initiation"/>
    <property type="evidence" value="ECO:0000318"/>
    <property type="project" value="GO_Central"/>
</dbReference>
<dbReference type="GO" id="GO:0006366">
    <property type="term" value="P:transcription by RNA polymerase II"/>
    <property type="evidence" value="ECO:0000250"/>
    <property type="project" value="UniProtKB"/>
</dbReference>
<dbReference type="GO" id="GO:0006367">
    <property type="term" value="P:transcription initiation at RNA polymerase II promoter"/>
    <property type="evidence" value="ECO:0000318"/>
    <property type="project" value="GO_Central"/>
</dbReference>
<dbReference type="CDD" id="cd04329">
    <property type="entry name" value="RNAP_II_Rpb7_N"/>
    <property type="match status" value="1"/>
</dbReference>
<dbReference type="CDD" id="cd04462">
    <property type="entry name" value="S1_RNAPII_Rpb7"/>
    <property type="match status" value="1"/>
</dbReference>
<dbReference type="FunFam" id="2.40.50.140:FF:000043">
    <property type="entry name" value="DNA-directed RNA polymerase II subunit RPB7"/>
    <property type="match status" value="1"/>
</dbReference>
<dbReference type="FunFam" id="3.30.1490.120:FF:000001">
    <property type="entry name" value="DNA-directed RNA polymerase II subunit RPB7"/>
    <property type="match status" value="1"/>
</dbReference>
<dbReference type="Gene3D" id="2.40.50.140">
    <property type="entry name" value="Nucleic acid-binding proteins"/>
    <property type="match status" value="1"/>
</dbReference>
<dbReference type="Gene3D" id="3.30.1490.120">
    <property type="entry name" value="RNA polymerase Rpb7-like, N-terminal domain"/>
    <property type="match status" value="1"/>
</dbReference>
<dbReference type="InterPro" id="IPR012340">
    <property type="entry name" value="NA-bd_OB-fold"/>
</dbReference>
<dbReference type="InterPro" id="IPR036898">
    <property type="entry name" value="RNA_pol_Rpb7-like_N_sf"/>
</dbReference>
<dbReference type="InterPro" id="IPR045113">
    <property type="entry name" value="Rpb7-like"/>
</dbReference>
<dbReference type="InterPro" id="IPR005576">
    <property type="entry name" value="Rpb7-like_N"/>
</dbReference>
<dbReference type="InterPro" id="IPR003029">
    <property type="entry name" value="S1_domain"/>
</dbReference>
<dbReference type="PANTHER" id="PTHR12709:SF4">
    <property type="entry name" value="DNA-DIRECTED RNA POLYMERASE II SUBUNIT RPB7"/>
    <property type="match status" value="1"/>
</dbReference>
<dbReference type="PANTHER" id="PTHR12709">
    <property type="entry name" value="DNA-DIRECTED RNA POLYMERASE II, III"/>
    <property type="match status" value="1"/>
</dbReference>
<dbReference type="Pfam" id="PF00575">
    <property type="entry name" value="S1"/>
    <property type="match status" value="1"/>
</dbReference>
<dbReference type="Pfam" id="PF03876">
    <property type="entry name" value="SHS2_Rpb7-N"/>
    <property type="match status" value="1"/>
</dbReference>
<dbReference type="SMART" id="SM00316">
    <property type="entry name" value="S1"/>
    <property type="match status" value="1"/>
</dbReference>
<dbReference type="SUPFAM" id="SSF88798">
    <property type="entry name" value="N-terminal, heterodimerisation domain of RBP7 (RpoE)"/>
    <property type="match status" value="1"/>
</dbReference>
<dbReference type="SUPFAM" id="SSF50249">
    <property type="entry name" value="Nucleic acid-binding proteins"/>
    <property type="match status" value="1"/>
</dbReference>
<organism>
    <name type="scientific">Danio rerio</name>
    <name type="common">Zebrafish</name>
    <name type="synonym">Brachydanio rerio</name>
    <dbReference type="NCBI Taxonomy" id="7955"/>
    <lineage>
        <taxon>Eukaryota</taxon>
        <taxon>Metazoa</taxon>
        <taxon>Chordata</taxon>
        <taxon>Craniata</taxon>
        <taxon>Vertebrata</taxon>
        <taxon>Euteleostomi</taxon>
        <taxon>Actinopterygii</taxon>
        <taxon>Neopterygii</taxon>
        <taxon>Teleostei</taxon>
        <taxon>Ostariophysi</taxon>
        <taxon>Cypriniformes</taxon>
        <taxon>Danionidae</taxon>
        <taxon>Danioninae</taxon>
        <taxon>Danio</taxon>
    </lineage>
</organism>
<comment type="function">
    <text evidence="1">DNA-dependent RNA polymerase catalyzes the transcription of DNA into RNA using the four ribonucleoside triphosphates as substrates. Component of RNA polymerase II which synthesizes mRNA precursors and many functional non-coding RNAs. Pol II is the central component of the basal RNA polymerase II transcription machinery. It is composed of mobile elements that move relative to each other. RPB7 is part of a subcomplex with RPB4 that binds to a pocket formed by RPB1, RPB2 and RPB6 at the base of the clamp element. The RPB4-RPB7 subcomplex seems to lock the clamp via RPB7 in the closed conformation thus preventing double-stranded DNA to enter the active site cleft. The RPB4-RPB7 subcomplex binds single-stranded DNA and RNA (By similarity).</text>
</comment>
<comment type="subunit">
    <text>Component of the RNA polymerase II (Pol II) complex consisting of 12 subunits. RPB4 and RPB7 form a subcomplex that protrudes from the 10-subunit Pol II core complex.</text>
</comment>
<comment type="subcellular location">
    <subcellularLocation>
        <location evidence="1">Nucleus</location>
    </subcellularLocation>
</comment>
<comment type="similarity">
    <text evidence="2">Belongs to the eukaryotic RPB7/RPC8 RNA polymerase subunit family.</text>
</comment>
<protein>
    <recommendedName>
        <fullName>DNA-directed RNA polymerase II subunit RPB7</fullName>
        <shortName>RNA polymerase II subunit B7</shortName>
    </recommendedName>
</protein>
<reference key="1">
    <citation type="submission" date="2003-01" db="EMBL/GenBank/DDBJ databases">
        <authorList>
            <consortium name="NIH - Zebrafish Gene Collection (ZGC) project"/>
        </authorList>
    </citation>
    <scope>NUCLEOTIDE SEQUENCE [LARGE SCALE MRNA]</scope>
</reference>
<proteinExistence type="evidence at transcript level"/>
<sequence>MFYHISLEHEILLHPRYFGPNLLNTVKQKLFTEVEGTCTGKYGFVIAVTTIDNIGAGVIQPGRGFVLYPVKYKAIVFRPFKGEVVDAVVTQVNKVGLFTEIGPMSCFISRHSIPSEMEFDPNSNPPCYKTVDEDVVIQQDDEIRLKIVGTRVDKNDIFAIGSLMDDYLGLVS</sequence>
<name>RPB7_DANRE</name>
<evidence type="ECO:0000250" key="1"/>
<evidence type="ECO:0000305" key="2"/>
<keyword id="KW-0240">DNA-directed RNA polymerase</keyword>
<keyword id="KW-0539">Nucleus</keyword>
<keyword id="KW-1185">Reference proteome</keyword>
<keyword id="KW-0804">Transcription</keyword>